<protein>
    <recommendedName>
        <fullName evidence="1">Orotate phosphoribosyltransferase</fullName>
        <shortName evidence="1">OPRT</shortName>
        <shortName evidence="1">OPRTase</shortName>
        <ecNumber evidence="1">2.4.2.10</ecNumber>
    </recommendedName>
</protein>
<reference key="1">
    <citation type="journal article" date="2008" name="J. Bacteriol.">
        <title>The genome of Heliobacterium modesticaldum, a phototrophic representative of the Firmicutes containing the simplest photosynthetic apparatus.</title>
        <authorList>
            <person name="Sattley W.M."/>
            <person name="Madigan M.T."/>
            <person name="Swingley W.D."/>
            <person name="Cheung P.C."/>
            <person name="Clocksin K.M."/>
            <person name="Conrad A.L."/>
            <person name="Dejesa L.C."/>
            <person name="Honchak B.M."/>
            <person name="Jung D.O."/>
            <person name="Karbach L.E."/>
            <person name="Kurdoglu A."/>
            <person name="Lahiri S."/>
            <person name="Mastrian S.D."/>
            <person name="Page L.E."/>
            <person name="Taylor H.L."/>
            <person name="Wang Z.T."/>
            <person name="Raymond J."/>
            <person name="Chen M."/>
            <person name="Blankenship R.E."/>
            <person name="Touchman J.W."/>
        </authorList>
    </citation>
    <scope>NUCLEOTIDE SEQUENCE [LARGE SCALE GENOMIC DNA]</scope>
    <source>
        <strain>ATCC 51547 / Ice1</strain>
    </source>
</reference>
<proteinExistence type="inferred from homology"/>
<comment type="function">
    <text evidence="1">Catalyzes the transfer of a ribosyl phosphate group from 5-phosphoribose 1-diphosphate to orotate, leading to the formation of orotidine monophosphate (OMP).</text>
</comment>
<comment type="catalytic activity">
    <reaction evidence="1">
        <text>orotidine 5'-phosphate + diphosphate = orotate + 5-phospho-alpha-D-ribose 1-diphosphate</text>
        <dbReference type="Rhea" id="RHEA:10380"/>
        <dbReference type="ChEBI" id="CHEBI:30839"/>
        <dbReference type="ChEBI" id="CHEBI:33019"/>
        <dbReference type="ChEBI" id="CHEBI:57538"/>
        <dbReference type="ChEBI" id="CHEBI:58017"/>
        <dbReference type="EC" id="2.4.2.10"/>
    </reaction>
</comment>
<comment type="cofactor">
    <cofactor evidence="1">
        <name>Mg(2+)</name>
        <dbReference type="ChEBI" id="CHEBI:18420"/>
    </cofactor>
</comment>
<comment type="pathway">
    <text evidence="1">Pyrimidine metabolism; UMP biosynthesis via de novo pathway; UMP from orotate: step 1/2.</text>
</comment>
<comment type="subunit">
    <text evidence="1">Homodimer.</text>
</comment>
<comment type="similarity">
    <text evidence="1">Belongs to the purine/pyrimidine phosphoribosyltransferase family. PyrE subfamily.</text>
</comment>
<feature type="chain" id="PRO_1000138795" description="Orotate phosphoribosyltransferase">
    <location>
        <begin position="1"/>
        <end position="191"/>
    </location>
</feature>
<feature type="binding site" evidence="1">
    <location>
        <begin position="116"/>
        <end position="124"/>
    </location>
    <ligand>
        <name>5-phospho-alpha-D-ribose 1-diphosphate</name>
        <dbReference type="ChEBI" id="CHEBI:58017"/>
    </ligand>
</feature>
<feature type="binding site" evidence="1">
    <location>
        <position position="120"/>
    </location>
    <ligand>
        <name>orotate</name>
        <dbReference type="ChEBI" id="CHEBI:30839"/>
    </ligand>
</feature>
<feature type="binding site" evidence="1">
    <location>
        <position position="148"/>
    </location>
    <ligand>
        <name>orotate</name>
        <dbReference type="ChEBI" id="CHEBI:30839"/>
    </ligand>
</feature>
<gene>
    <name evidence="1" type="primary">pyrE</name>
    <name type="ordered locus">Helmi_05230</name>
    <name type="ORF">HM1_0242</name>
</gene>
<keyword id="KW-0328">Glycosyltransferase</keyword>
<keyword id="KW-0460">Magnesium</keyword>
<keyword id="KW-0665">Pyrimidine biosynthesis</keyword>
<keyword id="KW-1185">Reference proteome</keyword>
<keyword id="KW-0808">Transferase</keyword>
<dbReference type="EC" id="2.4.2.10" evidence="1"/>
<dbReference type="EMBL" id="CP000930">
    <property type="protein sequence ID" value="ABZ82861.1"/>
    <property type="molecule type" value="Genomic_DNA"/>
</dbReference>
<dbReference type="SMR" id="B0TDZ8"/>
<dbReference type="STRING" id="498761.HM1_0242"/>
<dbReference type="KEGG" id="hmo:HM1_0242"/>
<dbReference type="eggNOG" id="COG0461">
    <property type="taxonomic scope" value="Bacteria"/>
</dbReference>
<dbReference type="HOGENOM" id="CLU_074878_3_0_9"/>
<dbReference type="OrthoDB" id="9783570at2"/>
<dbReference type="UniPathway" id="UPA00070">
    <property type="reaction ID" value="UER00119"/>
</dbReference>
<dbReference type="Proteomes" id="UP000008550">
    <property type="component" value="Chromosome"/>
</dbReference>
<dbReference type="GO" id="GO:0000287">
    <property type="term" value="F:magnesium ion binding"/>
    <property type="evidence" value="ECO:0007669"/>
    <property type="project" value="UniProtKB-UniRule"/>
</dbReference>
<dbReference type="GO" id="GO:0004588">
    <property type="term" value="F:orotate phosphoribosyltransferase activity"/>
    <property type="evidence" value="ECO:0007669"/>
    <property type="project" value="UniProtKB-UniRule"/>
</dbReference>
<dbReference type="GO" id="GO:0044205">
    <property type="term" value="P:'de novo' UMP biosynthetic process"/>
    <property type="evidence" value="ECO:0007669"/>
    <property type="project" value="UniProtKB-UniRule"/>
</dbReference>
<dbReference type="GO" id="GO:0019856">
    <property type="term" value="P:pyrimidine nucleobase biosynthetic process"/>
    <property type="evidence" value="ECO:0007669"/>
    <property type="project" value="InterPro"/>
</dbReference>
<dbReference type="CDD" id="cd06223">
    <property type="entry name" value="PRTases_typeI"/>
    <property type="match status" value="1"/>
</dbReference>
<dbReference type="Gene3D" id="3.40.50.2020">
    <property type="match status" value="1"/>
</dbReference>
<dbReference type="HAMAP" id="MF_01208">
    <property type="entry name" value="PyrE"/>
    <property type="match status" value="1"/>
</dbReference>
<dbReference type="InterPro" id="IPR023031">
    <property type="entry name" value="OPRT"/>
</dbReference>
<dbReference type="InterPro" id="IPR006273">
    <property type="entry name" value="Orotate_PRibTrfase_bac"/>
</dbReference>
<dbReference type="InterPro" id="IPR000836">
    <property type="entry name" value="PRibTrfase_dom"/>
</dbReference>
<dbReference type="InterPro" id="IPR029057">
    <property type="entry name" value="PRTase-like"/>
</dbReference>
<dbReference type="NCBIfam" id="TIGR01367">
    <property type="entry name" value="pyrE_Therm"/>
    <property type="match status" value="1"/>
</dbReference>
<dbReference type="PANTHER" id="PTHR19278">
    <property type="entry name" value="OROTATE PHOSPHORIBOSYLTRANSFERASE"/>
    <property type="match status" value="1"/>
</dbReference>
<dbReference type="PANTHER" id="PTHR19278:SF9">
    <property type="entry name" value="URIDINE 5'-MONOPHOSPHATE SYNTHASE"/>
    <property type="match status" value="1"/>
</dbReference>
<dbReference type="Pfam" id="PF00156">
    <property type="entry name" value="Pribosyltran"/>
    <property type="match status" value="1"/>
</dbReference>
<dbReference type="SUPFAM" id="SSF53271">
    <property type="entry name" value="PRTase-like"/>
    <property type="match status" value="1"/>
</dbReference>
<dbReference type="PROSITE" id="PS00103">
    <property type="entry name" value="PUR_PYR_PR_TRANSFER"/>
    <property type="match status" value="1"/>
</dbReference>
<organism>
    <name type="scientific">Heliobacterium modesticaldum (strain ATCC 51547 / Ice1)</name>
    <dbReference type="NCBI Taxonomy" id="498761"/>
    <lineage>
        <taxon>Bacteria</taxon>
        <taxon>Bacillati</taxon>
        <taxon>Bacillota</taxon>
        <taxon>Clostridia</taxon>
        <taxon>Eubacteriales</taxon>
        <taxon>Heliobacteriaceae</taxon>
        <taxon>Heliomicrobium</taxon>
    </lineage>
</organism>
<accession>B0TDZ8</accession>
<sequence>MSQDQVLDIFRNSEALLEGHFRLTSGRHSNRYVQCAQVLQHPPYTERLSRHLAALLRKGVGLPDVVIGPAMGGILVAYEVGRALGVRAIFTEREKGLMTLRRNFVVRPGETVVVCEDVVTTGGSVREVIDVATAAGGRVAAVAALVDRSNGQVDFGVPFFAALSMEVLSWPPEECPLCKEGTPAIKPGSRT</sequence>
<name>PYRE_HELMI</name>
<evidence type="ECO:0000255" key="1">
    <source>
        <dbReference type="HAMAP-Rule" id="MF_01208"/>
    </source>
</evidence>